<proteinExistence type="inferred from homology"/>
<feature type="chain" id="PRO_0000103894" description="Uncharacterized protein Rv1702cMb1728c">
    <location>
        <begin position="1"/>
        <end position="454"/>
    </location>
</feature>
<feature type="region of interest" description="Disordered" evidence="1">
    <location>
        <begin position="422"/>
        <end position="454"/>
    </location>
</feature>
<sequence length="454" mass="49396">MYSSSREEAVAAFDNLDTALNRVLKVSPDDLTIPECLAMLQRCEKIRRRLPAAEHPFINKLADQTDQTELGGKLPFALAERLHISRGEASRRIHEAADLGPRRTLTGQPLPPLLTATAAAQRAGHLGPAHVQVIRCFLHQLPHHVDLPTREKAEAELATLGGRFRPDQLHKLATKLADCLNPDGNYNDTDRARRRSIILGNQGPDGMSAISGYLTPEARATVDAVLAKLAAPGMANPADDTPCLAGTPSQAAIEADTRSAGQRHHDGLLAALRALLCSGELGQHNGLPAAIIVSTSLTELQSRAGHALTGGGTLLPMSDVIRLASHANHYLRIFDHGRELALYHTKRLASPGQRIVLYAKDRGCSFPNCDVPGYLTEVHHVTDFAQCQETDINELTQGCGPHHQLATTGGWITRKRKDGTTEWLPPAHLDHGQPRTNSYFHPEKLLHDSDEDDP</sequence>
<name>Y1702_MYCTU</name>
<accession>P9WLT3</accession>
<accession>L0T7N7</accession>
<accession>O33201</accession>
<accession>P64885</accession>
<dbReference type="EMBL" id="AL123456">
    <property type="protein sequence ID" value="CCP44467.1"/>
    <property type="molecule type" value="Genomic_DNA"/>
</dbReference>
<dbReference type="PIR" id="E70503">
    <property type="entry name" value="E70503"/>
</dbReference>
<dbReference type="RefSeq" id="NP_216218.1">
    <property type="nucleotide sequence ID" value="NC_000962.3"/>
</dbReference>
<dbReference type="RefSeq" id="WP_003898977.1">
    <property type="nucleotide sequence ID" value="NZ_NVQJ01000010.1"/>
</dbReference>
<dbReference type="STRING" id="83332.Rv1702c"/>
<dbReference type="PaxDb" id="83332-Rv1702c"/>
<dbReference type="DNASU" id="885061"/>
<dbReference type="GeneID" id="885061"/>
<dbReference type="KEGG" id="mtu:Rv1702c"/>
<dbReference type="KEGG" id="mtv:RVBD_1702c"/>
<dbReference type="TubercuList" id="Rv1702c"/>
<dbReference type="eggNOG" id="COG1403">
    <property type="taxonomic scope" value="Bacteria"/>
</dbReference>
<dbReference type="InParanoid" id="P9WLT3"/>
<dbReference type="OrthoDB" id="4419061at2"/>
<dbReference type="PhylomeDB" id="P9WLT3"/>
<dbReference type="Proteomes" id="UP000001584">
    <property type="component" value="Chromosome"/>
</dbReference>
<dbReference type="CDD" id="cd00085">
    <property type="entry name" value="HNHc"/>
    <property type="match status" value="1"/>
</dbReference>
<dbReference type="InterPro" id="IPR003870">
    <property type="entry name" value="DUF222"/>
</dbReference>
<dbReference type="InterPro" id="IPR003615">
    <property type="entry name" value="HNH_nuc"/>
</dbReference>
<dbReference type="Pfam" id="PF02720">
    <property type="entry name" value="DUF222"/>
    <property type="match status" value="1"/>
</dbReference>
<dbReference type="SMART" id="SM00507">
    <property type="entry name" value="HNHc"/>
    <property type="match status" value="1"/>
</dbReference>
<comment type="similarity">
    <text evidence="2">Belongs to the Rv1128c/1148c/1588c/1702c/1945/3466 family.</text>
</comment>
<reference key="1">
    <citation type="journal article" date="1998" name="Nature">
        <title>Deciphering the biology of Mycobacterium tuberculosis from the complete genome sequence.</title>
        <authorList>
            <person name="Cole S.T."/>
            <person name="Brosch R."/>
            <person name="Parkhill J."/>
            <person name="Garnier T."/>
            <person name="Churcher C.M."/>
            <person name="Harris D.E."/>
            <person name="Gordon S.V."/>
            <person name="Eiglmeier K."/>
            <person name="Gas S."/>
            <person name="Barry C.E. III"/>
            <person name="Tekaia F."/>
            <person name="Badcock K."/>
            <person name="Basham D."/>
            <person name="Brown D."/>
            <person name="Chillingworth T."/>
            <person name="Connor R."/>
            <person name="Davies R.M."/>
            <person name="Devlin K."/>
            <person name="Feltwell T."/>
            <person name="Gentles S."/>
            <person name="Hamlin N."/>
            <person name="Holroyd S."/>
            <person name="Hornsby T."/>
            <person name="Jagels K."/>
            <person name="Krogh A."/>
            <person name="McLean J."/>
            <person name="Moule S."/>
            <person name="Murphy L.D."/>
            <person name="Oliver S."/>
            <person name="Osborne J."/>
            <person name="Quail M.A."/>
            <person name="Rajandream M.A."/>
            <person name="Rogers J."/>
            <person name="Rutter S."/>
            <person name="Seeger K."/>
            <person name="Skelton S."/>
            <person name="Squares S."/>
            <person name="Squares R."/>
            <person name="Sulston J.E."/>
            <person name="Taylor K."/>
            <person name="Whitehead S."/>
            <person name="Barrell B.G."/>
        </authorList>
    </citation>
    <scope>NUCLEOTIDE SEQUENCE [LARGE SCALE GENOMIC DNA]</scope>
    <source>
        <strain>ATCC 25618 / H37Rv</strain>
    </source>
</reference>
<gene>
    <name type="ordered locus">Rv1702c</name>
    <name type="ORF">MTCI125.24c</name>
</gene>
<protein>
    <recommendedName>
        <fullName>Uncharacterized protein Rv1702cMb1728c</fullName>
    </recommendedName>
</protein>
<keyword id="KW-1185">Reference proteome</keyword>
<organism>
    <name type="scientific">Mycobacterium tuberculosis (strain ATCC 25618 / H37Rv)</name>
    <dbReference type="NCBI Taxonomy" id="83332"/>
    <lineage>
        <taxon>Bacteria</taxon>
        <taxon>Bacillati</taxon>
        <taxon>Actinomycetota</taxon>
        <taxon>Actinomycetes</taxon>
        <taxon>Mycobacteriales</taxon>
        <taxon>Mycobacteriaceae</taxon>
        <taxon>Mycobacterium</taxon>
        <taxon>Mycobacterium tuberculosis complex</taxon>
    </lineage>
</organism>
<evidence type="ECO:0000256" key="1">
    <source>
        <dbReference type="SAM" id="MobiDB-lite"/>
    </source>
</evidence>
<evidence type="ECO:0000305" key="2"/>